<evidence type="ECO:0000255" key="1">
    <source>
        <dbReference type="HAMAP-Rule" id="MF_00067"/>
    </source>
</evidence>
<accession>B1IPP6</accession>
<protein>
    <recommendedName>
        <fullName evidence="1">Phosphoheptose isomerase</fullName>
        <ecNumber evidence="1">5.3.1.28</ecNumber>
    </recommendedName>
    <alternativeName>
        <fullName evidence="1">Sedoheptulose 7-phosphate isomerase</fullName>
    </alternativeName>
</protein>
<gene>
    <name evidence="1" type="primary">gmhA</name>
    <name type="ordered locus">EcolC_3398</name>
</gene>
<sequence>MYQDLIRNELNEAAETLANFLKDDANIHAIQRAAVLLADSFKAGGKVLSCGNGGSHCDAMHFAEELTGRYRENRPGYPAIAISDVSHISCVGNDFGFNDIFSRYVEAVGREGDVLLGISTSGNSANVIKAIAAAREKGMKVITLTGKDGGKMAGTADIEIRVPHFGYADRIQEIHIKVIHILIQLIEKEMVK</sequence>
<reference key="1">
    <citation type="submission" date="2008-02" db="EMBL/GenBank/DDBJ databases">
        <title>Complete sequence of Escherichia coli C str. ATCC 8739.</title>
        <authorList>
            <person name="Copeland A."/>
            <person name="Lucas S."/>
            <person name="Lapidus A."/>
            <person name="Glavina del Rio T."/>
            <person name="Dalin E."/>
            <person name="Tice H."/>
            <person name="Bruce D."/>
            <person name="Goodwin L."/>
            <person name="Pitluck S."/>
            <person name="Kiss H."/>
            <person name="Brettin T."/>
            <person name="Detter J.C."/>
            <person name="Han C."/>
            <person name="Kuske C.R."/>
            <person name="Schmutz J."/>
            <person name="Larimer F."/>
            <person name="Land M."/>
            <person name="Hauser L."/>
            <person name="Kyrpides N."/>
            <person name="Mikhailova N."/>
            <person name="Ingram L."/>
            <person name="Richardson P."/>
        </authorList>
    </citation>
    <scope>NUCLEOTIDE SEQUENCE [LARGE SCALE GENOMIC DNA]</scope>
    <source>
        <strain>ATCC 8739 / DSM 1576 / NBRC 3972 / NCIMB 8545 / WDCM 00012 / Crooks</strain>
    </source>
</reference>
<comment type="function">
    <text evidence="1">Catalyzes the isomerization of sedoheptulose 7-phosphate in D-glycero-D-manno-heptose 7-phosphate.</text>
</comment>
<comment type="catalytic activity">
    <reaction evidence="1">
        <text>2 D-sedoheptulose 7-phosphate = D-glycero-alpha-D-manno-heptose 7-phosphate + D-glycero-beta-D-manno-heptose 7-phosphate</text>
        <dbReference type="Rhea" id="RHEA:27489"/>
        <dbReference type="ChEBI" id="CHEBI:57483"/>
        <dbReference type="ChEBI" id="CHEBI:60203"/>
        <dbReference type="ChEBI" id="CHEBI:60204"/>
        <dbReference type="EC" id="5.3.1.28"/>
    </reaction>
</comment>
<comment type="cofactor">
    <cofactor evidence="1">
        <name>Zn(2+)</name>
        <dbReference type="ChEBI" id="CHEBI:29105"/>
    </cofactor>
    <text evidence="1">Binds 1 zinc ion per subunit.</text>
</comment>
<comment type="pathway">
    <text evidence="1">Carbohydrate biosynthesis; D-glycero-D-manno-heptose 7-phosphate biosynthesis; D-glycero-alpha-D-manno-heptose 7-phosphate and D-glycero-beta-D-manno-heptose 7-phosphate from sedoheptulose 7-phosphate: step 1/1.</text>
</comment>
<comment type="subunit">
    <text evidence="1">Homotetramer.</text>
</comment>
<comment type="subcellular location">
    <subcellularLocation>
        <location evidence="1">Cytoplasm</location>
    </subcellularLocation>
</comment>
<comment type="miscellaneous">
    <text evidence="1">The reaction produces a racemic mixture of D-glycero-alpha-D-manno-heptose 7-phosphate and D-glycero-beta-D-manno-heptose 7-phosphate.</text>
</comment>
<comment type="similarity">
    <text evidence="1">Belongs to the SIS family. GmhA subfamily.</text>
</comment>
<feature type="chain" id="PRO_1000075096" description="Phosphoheptose isomerase">
    <location>
        <begin position="1"/>
        <end position="192"/>
    </location>
</feature>
<feature type="domain" description="SIS" evidence="1">
    <location>
        <begin position="37"/>
        <end position="192"/>
    </location>
</feature>
<feature type="binding site" evidence="1">
    <location>
        <begin position="52"/>
        <end position="54"/>
    </location>
    <ligand>
        <name>substrate</name>
    </ligand>
</feature>
<feature type="binding site" evidence="1">
    <location>
        <position position="61"/>
    </location>
    <ligand>
        <name>Zn(2+)</name>
        <dbReference type="ChEBI" id="CHEBI:29105"/>
    </ligand>
</feature>
<feature type="binding site" evidence="1">
    <location>
        <position position="65"/>
    </location>
    <ligand>
        <name>substrate</name>
    </ligand>
</feature>
<feature type="binding site" evidence="1">
    <location>
        <position position="65"/>
    </location>
    <ligand>
        <name>Zn(2+)</name>
        <dbReference type="ChEBI" id="CHEBI:29105"/>
    </ligand>
</feature>
<feature type="binding site" evidence="1">
    <location>
        <begin position="93"/>
        <end position="94"/>
    </location>
    <ligand>
        <name>substrate</name>
    </ligand>
</feature>
<feature type="binding site" evidence="1">
    <location>
        <begin position="119"/>
        <end position="121"/>
    </location>
    <ligand>
        <name>substrate</name>
    </ligand>
</feature>
<feature type="binding site" evidence="1">
    <location>
        <position position="124"/>
    </location>
    <ligand>
        <name>substrate</name>
    </ligand>
</feature>
<feature type="binding site" evidence="1">
    <location>
        <position position="172"/>
    </location>
    <ligand>
        <name>substrate</name>
    </ligand>
</feature>
<feature type="binding site" evidence="1">
    <location>
        <position position="172"/>
    </location>
    <ligand>
        <name>Zn(2+)</name>
        <dbReference type="ChEBI" id="CHEBI:29105"/>
    </ligand>
</feature>
<feature type="binding site" evidence="1">
    <location>
        <position position="180"/>
    </location>
    <ligand>
        <name>Zn(2+)</name>
        <dbReference type="ChEBI" id="CHEBI:29105"/>
    </ligand>
</feature>
<proteinExistence type="inferred from homology"/>
<dbReference type="EC" id="5.3.1.28" evidence="1"/>
<dbReference type="EMBL" id="CP000946">
    <property type="protein sequence ID" value="ACA79017.1"/>
    <property type="molecule type" value="Genomic_DNA"/>
</dbReference>
<dbReference type="SMR" id="B1IPP6"/>
<dbReference type="KEGG" id="ecl:EcolC_3398"/>
<dbReference type="HOGENOM" id="CLU_080999_4_0_6"/>
<dbReference type="UniPathway" id="UPA00041">
    <property type="reaction ID" value="UER00436"/>
</dbReference>
<dbReference type="GO" id="GO:0005737">
    <property type="term" value="C:cytoplasm"/>
    <property type="evidence" value="ECO:0007669"/>
    <property type="project" value="UniProtKB-SubCell"/>
</dbReference>
<dbReference type="GO" id="GO:0097367">
    <property type="term" value="F:carbohydrate derivative binding"/>
    <property type="evidence" value="ECO:0007669"/>
    <property type="project" value="InterPro"/>
</dbReference>
<dbReference type="GO" id="GO:0008968">
    <property type="term" value="F:D-sedoheptulose 7-phosphate isomerase activity"/>
    <property type="evidence" value="ECO:0007669"/>
    <property type="project" value="UniProtKB-UniRule"/>
</dbReference>
<dbReference type="GO" id="GO:0008270">
    <property type="term" value="F:zinc ion binding"/>
    <property type="evidence" value="ECO:0007669"/>
    <property type="project" value="UniProtKB-UniRule"/>
</dbReference>
<dbReference type="GO" id="GO:0005975">
    <property type="term" value="P:carbohydrate metabolic process"/>
    <property type="evidence" value="ECO:0007669"/>
    <property type="project" value="UniProtKB-UniRule"/>
</dbReference>
<dbReference type="GO" id="GO:2001061">
    <property type="term" value="P:D-glycero-D-manno-heptose 7-phosphate biosynthetic process"/>
    <property type="evidence" value="ECO:0007669"/>
    <property type="project" value="UniProtKB-UniPathway"/>
</dbReference>
<dbReference type="CDD" id="cd05006">
    <property type="entry name" value="SIS_GmhA"/>
    <property type="match status" value="1"/>
</dbReference>
<dbReference type="FunFam" id="3.40.50.10490:FF:000013">
    <property type="entry name" value="Phosphoheptose isomerase"/>
    <property type="match status" value="1"/>
</dbReference>
<dbReference type="Gene3D" id="3.40.50.10490">
    <property type="entry name" value="Glucose-6-phosphate isomerase like protein, domain 1"/>
    <property type="match status" value="1"/>
</dbReference>
<dbReference type="HAMAP" id="MF_00067">
    <property type="entry name" value="GmhA"/>
    <property type="match status" value="1"/>
</dbReference>
<dbReference type="InterPro" id="IPR035461">
    <property type="entry name" value="GmhA/DiaA"/>
</dbReference>
<dbReference type="InterPro" id="IPR004515">
    <property type="entry name" value="Phosphoheptose_Isoase"/>
</dbReference>
<dbReference type="InterPro" id="IPR001347">
    <property type="entry name" value="SIS_dom"/>
</dbReference>
<dbReference type="InterPro" id="IPR046348">
    <property type="entry name" value="SIS_dom_sf"/>
</dbReference>
<dbReference type="InterPro" id="IPR050099">
    <property type="entry name" value="SIS_GmhA/DiaA_subfam"/>
</dbReference>
<dbReference type="NCBIfam" id="TIGR00441">
    <property type="entry name" value="gmhA"/>
    <property type="match status" value="1"/>
</dbReference>
<dbReference type="NCBIfam" id="NF001628">
    <property type="entry name" value="PRK00414.1"/>
    <property type="match status" value="1"/>
</dbReference>
<dbReference type="PANTHER" id="PTHR30390:SF7">
    <property type="entry name" value="PHOSPHOHEPTOSE ISOMERASE"/>
    <property type="match status" value="1"/>
</dbReference>
<dbReference type="PANTHER" id="PTHR30390">
    <property type="entry name" value="SEDOHEPTULOSE 7-PHOSPHATE ISOMERASE / DNAA INITIATOR-ASSOCIATING FACTOR FOR REPLICATION INITIATION"/>
    <property type="match status" value="1"/>
</dbReference>
<dbReference type="Pfam" id="PF13580">
    <property type="entry name" value="SIS_2"/>
    <property type="match status" value="1"/>
</dbReference>
<dbReference type="SUPFAM" id="SSF53697">
    <property type="entry name" value="SIS domain"/>
    <property type="match status" value="1"/>
</dbReference>
<dbReference type="PROSITE" id="PS51464">
    <property type="entry name" value="SIS"/>
    <property type="match status" value="1"/>
</dbReference>
<organism>
    <name type="scientific">Escherichia coli (strain ATCC 8739 / DSM 1576 / NBRC 3972 / NCIMB 8545 / WDCM 00012 / Crooks)</name>
    <dbReference type="NCBI Taxonomy" id="481805"/>
    <lineage>
        <taxon>Bacteria</taxon>
        <taxon>Pseudomonadati</taxon>
        <taxon>Pseudomonadota</taxon>
        <taxon>Gammaproteobacteria</taxon>
        <taxon>Enterobacterales</taxon>
        <taxon>Enterobacteriaceae</taxon>
        <taxon>Escherichia</taxon>
    </lineage>
</organism>
<keyword id="KW-0119">Carbohydrate metabolism</keyword>
<keyword id="KW-0963">Cytoplasm</keyword>
<keyword id="KW-0413">Isomerase</keyword>
<keyword id="KW-0479">Metal-binding</keyword>
<keyword id="KW-0862">Zinc</keyword>
<name>GMHA_ECOLC</name>